<dbReference type="EMBL" id="BC090536">
    <property type="protein sequence ID" value="AAH90536.1"/>
    <property type="status" value="ALT_SEQ"/>
    <property type="molecule type" value="mRNA"/>
</dbReference>
<dbReference type="EMBL" id="BC109424">
    <property type="protein sequence ID" value="AAI09425.1"/>
    <property type="molecule type" value="mRNA"/>
</dbReference>
<dbReference type="RefSeq" id="NP_001032449.1">
    <property type="nucleotide sequence ID" value="NM_001037372.1"/>
</dbReference>
<dbReference type="SMR" id="Q32LU7"/>
<dbReference type="FunCoup" id="Q32LU7">
    <property type="interactions" value="1593"/>
</dbReference>
<dbReference type="STRING" id="7955.ENSDARP00000135512"/>
<dbReference type="PaxDb" id="7955-ENSDARP00000074588"/>
<dbReference type="GeneID" id="553325"/>
<dbReference type="KEGG" id="dre:553325"/>
<dbReference type="AGR" id="ZFIN:ZDB-GENE-030131-6849"/>
<dbReference type="CTD" id="55037"/>
<dbReference type="ZFIN" id="ZDB-GENE-030131-6849">
    <property type="gene designation" value="ptcd3"/>
</dbReference>
<dbReference type="eggNOG" id="KOG4422">
    <property type="taxonomic scope" value="Eukaryota"/>
</dbReference>
<dbReference type="InParanoid" id="Q32LU7"/>
<dbReference type="OrthoDB" id="185373at2759"/>
<dbReference type="PhylomeDB" id="Q32LU7"/>
<dbReference type="Reactome" id="R-DRE-5389840">
    <property type="pathway name" value="Mitochondrial translation elongation"/>
</dbReference>
<dbReference type="Reactome" id="R-DRE-5419276">
    <property type="pathway name" value="Mitochondrial translation termination"/>
</dbReference>
<dbReference type="PRO" id="PR:Q32LU7"/>
<dbReference type="Proteomes" id="UP000000437">
    <property type="component" value="Chromosome 14"/>
</dbReference>
<dbReference type="GO" id="GO:0005739">
    <property type="term" value="C:mitochondrion"/>
    <property type="evidence" value="ECO:0000250"/>
    <property type="project" value="UniProtKB"/>
</dbReference>
<dbReference type="GO" id="GO:1990904">
    <property type="term" value="C:ribonucleoprotein complex"/>
    <property type="evidence" value="ECO:0007669"/>
    <property type="project" value="UniProtKB-KW"/>
</dbReference>
<dbReference type="GO" id="GO:0005840">
    <property type="term" value="C:ribosome"/>
    <property type="evidence" value="ECO:0007669"/>
    <property type="project" value="UniProtKB-KW"/>
</dbReference>
<dbReference type="GO" id="GO:0043024">
    <property type="term" value="F:ribosomal small subunit binding"/>
    <property type="evidence" value="ECO:0000250"/>
    <property type="project" value="UniProtKB"/>
</dbReference>
<dbReference type="GO" id="GO:0019843">
    <property type="term" value="F:rRNA binding"/>
    <property type="evidence" value="ECO:0000250"/>
    <property type="project" value="UniProtKB"/>
</dbReference>
<dbReference type="GO" id="GO:0032543">
    <property type="term" value="P:mitochondrial translation"/>
    <property type="evidence" value="ECO:0000250"/>
    <property type="project" value="UniProtKB"/>
</dbReference>
<dbReference type="GO" id="GO:0006417">
    <property type="term" value="P:regulation of translation"/>
    <property type="evidence" value="ECO:0007669"/>
    <property type="project" value="UniProtKB-KW"/>
</dbReference>
<dbReference type="FunFam" id="1.25.40.10:FF:001205">
    <property type="entry name" value="Pentatricopeptide repeat domain 3"/>
    <property type="match status" value="1"/>
</dbReference>
<dbReference type="Gene3D" id="1.25.40.10">
    <property type="entry name" value="Tetratricopeptide repeat domain"/>
    <property type="match status" value="2"/>
</dbReference>
<dbReference type="InterPro" id="IPR002885">
    <property type="entry name" value="Pentatricopeptide_rpt"/>
</dbReference>
<dbReference type="InterPro" id="IPR037387">
    <property type="entry name" value="PTCD3"/>
</dbReference>
<dbReference type="InterPro" id="IPR055063">
    <property type="entry name" value="Rib_mS39_PPR"/>
</dbReference>
<dbReference type="InterPro" id="IPR011990">
    <property type="entry name" value="TPR-like_helical_dom_sf"/>
</dbReference>
<dbReference type="PANTHER" id="PTHR16276">
    <property type="entry name" value="PENTATRICOPEPTIDE REPEAT DOMAIN-CONTAINING PROTEIN 3"/>
    <property type="match status" value="1"/>
</dbReference>
<dbReference type="PANTHER" id="PTHR16276:SF1">
    <property type="entry name" value="SMALL RIBOSOMAL SUBUNIT PROTEIN MS39"/>
    <property type="match status" value="1"/>
</dbReference>
<dbReference type="Pfam" id="PF13812">
    <property type="entry name" value="PPR_3"/>
    <property type="match status" value="1"/>
</dbReference>
<dbReference type="Pfam" id="PF22330">
    <property type="entry name" value="Rib_mS39_PPR"/>
    <property type="match status" value="1"/>
</dbReference>
<feature type="transit peptide" description="Mitochondrion" evidence="2">
    <location>
        <begin position="1"/>
        <end position="11"/>
    </location>
</feature>
<feature type="chain" id="PRO_0000305031" description="Small ribosomal subunit protein mS39">
    <location>
        <begin position="12"/>
        <end position="667"/>
    </location>
</feature>
<feature type="repeat" description="PPR 1">
    <location>
        <begin position="249"/>
        <end position="283"/>
    </location>
</feature>
<feature type="repeat" description="PPR 2">
    <location>
        <begin position="284"/>
        <end position="323"/>
    </location>
</feature>
<feature type="repeat" description="PPR 3">
    <location>
        <begin position="324"/>
        <end position="360"/>
    </location>
</feature>
<feature type="repeat" description="PPR 4">
    <location>
        <begin position="361"/>
        <end position="400"/>
    </location>
</feature>
<feature type="repeat" description="PPR 5">
    <location>
        <begin position="482"/>
        <end position="516"/>
    </location>
</feature>
<feature type="repeat" description="PPR 6">
    <location>
        <begin position="565"/>
        <end position="599"/>
    </location>
</feature>
<feature type="region of interest" description="Disordered" evidence="3">
    <location>
        <begin position="199"/>
        <end position="226"/>
    </location>
</feature>
<name>PTCD3_DANRE</name>
<comment type="function">
    <text evidence="1">Mitochondrial RNA-binding protein that may have a role in mitochondrial translation.</text>
</comment>
<comment type="subcellular location">
    <subcellularLocation>
        <location evidence="1">Mitochondrion</location>
    </subcellularLocation>
</comment>
<comment type="similarity">
    <text evidence="4">Belongs to the mitochondrion-specific ribosomal protein mS39 family.</text>
</comment>
<comment type="sequence caution" evidence="4">
    <conflict type="miscellaneous discrepancy">
        <sequence resource="EMBL-CDS" id="AAH90536"/>
    </conflict>
    <text>Contaminating sequence. Potential poly-A sequence.</text>
</comment>
<organism>
    <name type="scientific">Danio rerio</name>
    <name type="common">Zebrafish</name>
    <name type="synonym">Brachydanio rerio</name>
    <dbReference type="NCBI Taxonomy" id="7955"/>
    <lineage>
        <taxon>Eukaryota</taxon>
        <taxon>Metazoa</taxon>
        <taxon>Chordata</taxon>
        <taxon>Craniata</taxon>
        <taxon>Vertebrata</taxon>
        <taxon>Euteleostomi</taxon>
        <taxon>Actinopterygii</taxon>
        <taxon>Neopterygii</taxon>
        <taxon>Teleostei</taxon>
        <taxon>Ostariophysi</taxon>
        <taxon>Cypriniformes</taxon>
        <taxon>Danionidae</taxon>
        <taxon>Danioninae</taxon>
        <taxon>Danio</taxon>
    </lineage>
</organism>
<reference key="1">
    <citation type="submission" date="2005-11" db="EMBL/GenBank/DDBJ databases">
        <authorList>
            <consortium name="NIH - Zebrafish Gene Collection (ZGC) project"/>
        </authorList>
    </citation>
    <scope>NUCLEOTIDE SEQUENCE [LARGE SCALE MRNA]</scope>
    <source>
        <strain>AB</strain>
        <tissue>Embryo</tissue>
        <tissue>Liver</tissue>
    </source>
</reference>
<accession>Q32LU7</accession>
<accession>Q5BLA3</accession>
<gene>
    <name type="primary">ptcd3</name>
    <name type="ORF">zgc:123014</name>
</gene>
<keyword id="KW-0496">Mitochondrion</keyword>
<keyword id="KW-1185">Reference proteome</keyword>
<keyword id="KW-0677">Repeat</keyword>
<keyword id="KW-0687">Ribonucleoprotein</keyword>
<keyword id="KW-0689">Ribosomal protein</keyword>
<keyword id="KW-0694">RNA-binding</keyword>
<keyword id="KW-0699">rRNA-binding</keyword>
<keyword id="KW-0809">Transit peptide</keyword>
<keyword id="KW-0810">Translation regulation</keyword>
<evidence type="ECO:0000250" key="1"/>
<evidence type="ECO:0000255" key="2"/>
<evidence type="ECO:0000256" key="3">
    <source>
        <dbReference type="SAM" id="MobiDB-lite"/>
    </source>
</evidence>
<evidence type="ECO:0000305" key="4"/>
<proteinExistence type="evidence at transcript level"/>
<protein>
    <recommendedName>
        <fullName evidence="4">Small ribosomal subunit protein mS39</fullName>
    </recommendedName>
    <alternativeName>
        <fullName>Pentatricopeptide repeat domain-containing protein 3, mitochondrial</fullName>
    </alternativeName>
</protein>
<sequence>MASSCSQALRHHACKSSKILRIHLQKSWTNRSFAAYQQPDVSSQEEIVIPKKKTWSKEAVLQALASTVKRDPTASDYRLQDDSFLTPKTASDFKLFCRSQESGRNAAKYFINKYPKYFEKDYAQPHIPCLMPETLDAQLEDVSEAALKERIQLRKVKAAVDLYDQLLQAGTSVSLDLTNDLLDLICLYGEADPVQETFEAEQRSEEMEDIQDETQTKKGRSPKASDLLKTSWKENNNAERIFGLLSEPNTRSYSALIRGMVKHAAYTQAFSTYTDLLNNRLKADVHIFNALLAAVPAVRPKYNEKWELILDLLKQMAEQKVKPNLLTLNAILKSLRRCGALGRSQAFPVISEMKVLSIEPSLASYNHLLAIFYRSGAQVQTPTDVLVEVMNEVSGKSFTPQDPDDAQFFTTAMRVCLDTKDMEQAYRVHELLGVGDNWRFMGSDFQQSIYYAWFFSLLCMMENIDVVMKWYRDLVPSVYYPSSNAMSDLLRALDTDSRLDLIPKIWKDMKQLGHGNRQQLVEEVLTLMAREKHCPEVQESFADCALDIMKMYDTNERGKVIMSWTASSLSDVTTILLAANRKQEAWEMLKLFRTHNRVPSAELLNQFVTCVKEAGQVSQAVELVQISAAFCLSETPKLIQRVQQEFELSEEHKNILSDLEIQTFNGD</sequence>